<feature type="chain" id="PRO_1000143041" description="Large ribosomal subunit protein uL16">
    <location>
        <begin position="1"/>
        <end position="144"/>
    </location>
</feature>
<sequence length="144" mass="16154">MLMPKRVKYRKQQRGRIKGNATRGNTLTYGEYGLQALEPGWITATQIEAARVAMTRFIKRGGKVWIKIFPDKPVTKKPAETRMGSGKGSPEFWVAVVKPGRVLFEIAGVSEEVAKEALRLAMHKLPIKTKFLKREELGGEDNEG</sequence>
<comment type="function">
    <text evidence="1">Binds 23S rRNA and is also seen to make contacts with the A and possibly P site tRNAs.</text>
</comment>
<comment type="subunit">
    <text evidence="1">Part of the 50S ribosomal subunit.</text>
</comment>
<comment type="similarity">
    <text evidence="1">Belongs to the universal ribosomal protein uL16 family.</text>
</comment>
<keyword id="KW-1185">Reference proteome</keyword>
<keyword id="KW-0687">Ribonucleoprotein</keyword>
<keyword id="KW-0689">Ribosomal protein</keyword>
<keyword id="KW-0694">RNA-binding</keyword>
<keyword id="KW-0699">rRNA-binding</keyword>
<keyword id="KW-0820">tRNA-binding</keyword>
<gene>
    <name evidence="1" type="primary">rplP</name>
    <name type="ordered locus">Teth39_0381</name>
</gene>
<accession>B0KCK7</accession>
<evidence type="ECO:0000255" key="1">
    <source>
        <dbReference type="HAMAP-Rule" id="MF_01342"/>
    </source>
</evidence>
<evidence type="ECO:0000305" key="2"/>
<dbReference type="EMBL" id="CP000924">
    <property type="protein sequence ID" value="ABY94050.1"/>
    <property type="molecule type" value="Genomic_DNA"/>
</dbReference>
<dbReference type="RefSeq" id="WP_012268993.1">
    <property type="nucleotide sequence ID" value="NC_010321.1"/>
</dbReference>
<dbReference type="SMR" id="B0KCK7"/>
<dbReference type="STRING" id="340099.Teth39_0381"/>
<dbReference type="KEGG" id="tpd:Teth39_0381"/>
<dbReference type="eggNOG" id="COG0197">
    <property type="taxonomic scope" value="Bacteria"/>
</dbReference>
<dbReference type="HOGENOM" id="CLU_078858_2_1_9"/>
<dbReference type="Proteomes" id="UP000002156">
    <property type="component" value="Chromosome"/>
</dbReference>
<dbReference type="GO" id="GO:0022625">
    <property type="term" value="C:cytosolic large ribosomal subunit"/>
    <property type="evidence" value="ECO:0007669"/>
    <property type="project" value="TreeGrafter"/>
</dbReference>
<dbReference type="GO" id="GO:0019843">
    <property type="term" value="F:rRNA binding"/>
    <property type="evidence" value="ECO:0007669"/>
    <property type="project" value="UniProtKB-UniRule"/>
</dbReference>
<dbReference type="GO" id="GO:0003735">
    <property type="term" value="F:structural constituent of ribosome"/>
    <property type="evidence" value="ECO:0007669"/>
    <property type="project" value="InterPro"/>
</dbReference>
<dbReference type="GO" id="GO:0000049">
    <property type="term" value="F:tRNA binding"/>
    <property type="evidence" value="ECO:0007669"/>
    <property type="project" value="UniProtKB-KW"/>
</dbReference>
<dbReference type="GO" id="GO:0006412">
    <property type="term" value="P:translation"/>
    <property type="evidence" value="ECO:0007669"/>
    <property type="project" value="UniProtKB-UniRule"/>
</dbReference>
<dbReference type="CDD" id="cd01433">
    <property type="entry name" value="Ribosomal_L16_L10e"/>
    <property type="match status" value="1"/>
</dbReference>
<dbReference type="FunFam" id="3.90.1170.10:FF:000001">
    <property type="entry name" value="50S ribosomal protein L16"/>
    <property type="match status" value="1"/>
</dbReference>
<dbReference type="Gene3D" id="3.90.1170.10">
    <property type="entry name" value="Ribosomal protein L10e/L16"/>
    <property type="match status" value="1"/>
</dbReference>
<dbReference type="HAMAP" id="MF_01342">
    <property type="entry name" value="Ribosomal_uL16"/>
    <property type="match status" value="1"/>
</dbReference>
<dbReference type="InterPro" id="IPR047873">
    <property type="entry name" value="Ribosomal_uL16"/>
</dbReference>
<dbReference type="InterPro" id="IPR000114">
    <property type="entry name" value="Ribosomal_uL16_bact-type"/>
</dbReference>
<dbReference type="InterPro" id="IPR020798">
    <property type="entry name" value="Ribosomal_uL16_CS"/>
</dbReference>
<dbReference type="InterPro" id="IPR016180">
    <property type="entry name" value="Ribosomal_uL16_dom"/>
</dbReference>
<dbReference type="InterPro" id="IPR036920">
    <property type="entry name" value="Ribosomal_uL16_sf"/>
</dbReference>
<dbReference type="NCBIfam" id="TIGR01164">
    <property type="entry name" value="rplP_bact"/>
    <property type="match status" value="1"/>
</dbReference>
<dbReference type="PANTHER" id="PTHR12220">
    <property type="entry name" value="50S/60S RIBOSOMAL PROTEIN L16"/>
    <property type="match status" value="1"/>
</dbReference>
<dbReference type="PANTHER" id="PTHR12220:SF13">
    <property type="entry name" value="LARGE RIBOSOMAL SUBUNIT PROTEIN UL16M"/>
    <property type="match status" value="1"/>
</dbReference>
<dbReference type="Pfam" id="PF00252">
    <property type="entry name" value="Ribosomal_L16"/>
    <property type="match status" value="1"/>
</dbReference>
<dbReference type="PRINTS" id="PR00060">
    <property type="entry name" value="RIBOSOMALL16"/>
</dbReference>
<dbReference type="SUPFAM" id="SSF54686">
    <property type="entry name" value="Ribosomal protein L16p/L10e"/>
    <property type="match status" value="1"/>
</dbReference>
<dbReference type="PROSITE" id="PS00586">
    <property type="entry name" value="RIBOSOMAL_L16_1"/>
    <property type="match status" value="1"/>
</dbReference>
<dbReference type="PROSITE" id="PS00701">
    <property type="entry name" value="RIBOSOMAL_L16_2"/>
    <property type="match status" value="1"/>
</dbReference>
<protein>
    <recommendedName>
        <fullName evidence="1">Large ribosomal subunit protein uL16</fullName>
    </recommendedName>
    <alternativeName>
        <fullName evidence="2">50S ribosomal protein L16</fullName>
    </alternativeName>
</protein>
<reference key="1">
    <citation type="submission" date="2008-01" db="EMBL/GenBank/DDBJ databases">
        <title>Complete sequence of Thermoanaerobacter pseudethanolicus 39E.</title>
        <authorList>
            <person name="Copeland A."/>
            <person name="Lucas S."/>
            <person name="Lapidus A."/>
            <person name="Barry K."/>
            <person name="Glavina del Rio T."/>
            <person name="Dalin E."/>
            <person name="Tice H."/>
            <person name="Pitluck S."/>
            <person name="Bruce D."/>
            <person name="Goodwin L."/>
            <person name="Saunders E."/>
            <person name="Brettin T."/>
            <person name="Detter J.C."/>
            <person name="Han C."/>
            <person name="Schmutz J."/>
            <person name="Larimer F."/>
            <person name="Land M."/>
            <person name="Hauser L."/>
            <person name="Kyrpides N."/>
            <person name="Lykidis A."/>
            <person name="Hemme C."/>
            <person name="Fields M.W."/>
            <person name="He Z."/>
            <person name="Zhou J."/>
            <person name="Richardson P."/>
        </authorList>
    </citation>
    <scope>NUCLEOTIDE SEQUENCE [LARGE SCALE GENOMIC DNA]</scope>
    <source>
        <strain>ATCC 33223 / DSM 2355 / 39E</strain>
    </source>
</reference>
<organism>
    <name type="scientific">Thermoanaerobacter pseudethanolicus (strain ATCC 33223 / 39E)</name>
    <name type="common">Clostridium thermohydrosulfuricum</name>
    <dbReference type="NCBI Taxonomy" id="340099"/>
    <lineage>
        <taxon>Bacteria</taxon>
        <taxon>Bacillati</taxon>
        <taxon>Bacillota</taxon>
        <taxon>Clostridia</taxon>
        <taxon>Thermoanaerobacterales</taxon>
        <taxon>Thermoanaerobacteraceae</taxon>
        <taxon>Thermoanaerobacter</taxon>
    </lineage>
</organism>
<proteinExistence type="inferred from homology"/>
<name>RL16_THEP3</name>